<reference key="1">
    <citation type="submission" date="2007-04" db="EMBL/GenBank/DDBJ databases">
        <title>Complete sequence of Shewanella putrefaciens CN-32.</title>
        <authorList>
            <consortium name="US DOE Joint Genome Institute"/>
            <person name="Copeland A."/>
            <person name="Lucas S."/>
            <person name="Lapidus A."/>
            <person name="Barry K."/>
            <person name="Detter J.C."/>
            <person name="Glavina del Rio T."/>
            <person name="Hammon N."/>
            <person name="Israni S."/>
            <person name="Dalin E."/>
            <person name="Tice H."/>
            <person name="Pitluck S."/>
            <person name="Chain P."/>
            <person name="Malfatti S."/>
            <person name="Shin M."/>
            <person name="Vergez L."/>
            <person name="Schmutz J."/>
            <person name="Larimer F."/>
            <person name="Land M."/>
            <person name="Hauser L."/>
            <person name="Kyrpides N."/>
            <person name="Mikhailova N."/>
            <person name="Romine M.F."/>
            <person name="Fredrickson J."/>
            <person name="Tiedje J."/>
            <person name="Richardson P."/>
        </authorList>
    </citation>
    <scope>NUCLEOTIDE SEQUENCE [LARGE SCALE GENOMIC DNA]</scope>
    <source>
        <strain>CN-32 / ATCC BAA-453</strain>
    </source>
</reference>
<gene>
    <name evidence="1" type="primary">nfuA</name>
    <name type="ordered locus">Sputcn32_3794</name>
</gene>
<feature type="chain" id="PRO_1000069877" description="Fe/S biogenesis protein NfuA">
    <location>
        <begin position="1"/>
        <end position="192"/>
    </location>
</feature>
<feature type="binding site" evidence="1">
    <location>
        <position position="149"/>
    </location>
    <ligand>
        <name>[4Fe-4S] cluster</name>
        <dbReference type="ChEBI" id="CHEBI:49883"/>
    </ligand>
</feature>
<feature type="binding site" evidence="1">
    <location>
        <position position="152"/>
    </location>
    <ligand>
        <name>[4Fe-4S] cluster</name>
        <dbReference type="ChEBI" id="CHEBI:49883"/>
    </ligand>
</feature>
<protein>
    <recommendedName>
        <fullName evidence="1">Fe/S biogenesis protein NfuA</fullName>
    </recommendedName>
</protein>
<accession>A4YC18</accession>
<evidence type="ECO:0000255" key="1">
    <source>
        <dbReference type="HAMAP-Rule" id="MF_01637"/>
    </source>
</evidence>
<comment type="function">
    <text evidence="1">Involved in iron-sulfur cluster biogenesis. Binds a 4Fe-4S cluster, can transfer this cluster to apoproteins, and thereby intervenes in the maturation of Fe/S proteins. Could also act as a scaffold/chaperone for damaged Fe/S proteins.</text>
</comment>
<comment type="cofactor">
    <cofactor evidence="1">
        <name>[4Fe-4S] cluster</name>
        <dbReference type="ChEBI" id="CHEBI:49883"/>
    </cofactor>
    <text evidence="1">Binds 1 [4Fe-4S] cluster per subunit. The cluster is presumably bound at the interface of two monomers.</text>
</comment>
<comment type="subunit">
    <text evidence="1">Homodimer.</text>
</comment>
<comment type="similarity">
    <text evidence="1">Belongs to the NfuA family.</text>
</comment>
<name>NFUA_SHEPC</name>
<sequence>MITISDAAQAHFVKLLADQPEGTHIRVFVISPGTAQAECGVSYCPPDAVESDDIELEFNGFNAMVDEKSAPFLEEATIDFVTDQLGSQLTLKAPNAKMRKVSGDAPLVERIEYVIQSEINPQLASHGGNIMLVEITSEGVAVLQFGGGCNGCSQVDITLKDGIEKQLLDMFPGELTGVRDVTDHQHGEHSYA</sequence>
<proteinExistence type="inferred from homology"/>
<keyword id="KW-0004">4Fe-4S</keyword>
<keyword id="KW-0408">Iron</keyword>
<keyword id="KW-0411">Iron-sulfur</keyword>
<keyword id="KW-0479">Metal-binding</keyword>
<dbReference type="EMBL" id="CP000681">
    <property type="protein sequence ID" value="ABP77501.1"/>
    <property type="molecule type" value="Genomic_DNA"/>
</dbReference>
<dbReference type="SMR" id="A4YC18"/>
<dbReference type="STRING" id="319224.Sputcn32_3794"/>
<dbReference type="KEGG" id="spc:Sputcn32_3794"/>
<dbReference type="eggNOG" id="COG0316">
    <property type="taxonomic scope" value="Bacteria"/>
</dbReference>
<dbReference type="eggNOG" id="COG0694">
    <property type="taxonomic scope" value="Bacteria"/>
</dbReference>
<dbReference type="HOGENOM" id="CLU_094569_0_0_6"/>
<dbReference type="GO" id="GO:0051539">
    <property type="term" value="F:4 iron, 4 sulfur cluster binding"/>
    <property type="evidence" value="ECO:0007669"/>
    <property type="project" value="UniProtKB-UniRule"/>
</dbReference>
<dbReference type="GO" id="GO:0005506">
    <property type="term" value="F:iron ion binding"/>
    <property type="evidence" value="ECO:0007669"/>
    <property type="project" value="InterPro"/>
</dbReference>
<dbReference type="GO" id="GO:0016226">
    <property type="term" value="P:iron-sulfur cluster assembly"/>
    <property type="evidence" value="ECO:0007669"/>
    <property type="project" value="UniProtKB-UniRule"/>
</dbReference>
<dbReference type="GO" id="GO:0051604">
    <property type="term" value="P:protein maturation"/>
    <property type="evidence" value="ECO:0007669"/>
    <property type="project" value="UniProtKB-UniRule"/>
</dbReference>
<dbReference type="Gene3D" id="3.30.300.130">
    <property type="entry name" value="Fe-S cluster assembly (FSCA)"/>
    <property type="match status" value="1"/>
</dbReference>
<dbReference type="Gene3D" id="2.60.300.12">
    <property type="entry name" value="HesB-like domain"/>
    <property type="match status" value="1"/>
</dbReference>
<dbReference type="HAMAP" id="MF_01637">
    <property type="entry name" value="Fe_S_biogen_NfuA"/>
    <property type="match status" value="1"/>
</dbReference>
<dbReference type="InterPro" id="IPR017726">
    <property type="entry name" value="Fe/S_biogenesis_protein_NfuA"/>
</dbReference>
<dbReference type="InterPro" id="IPR000361">
    <property type="entry name" value="FeS_biogenesis"/>
</dbReference>
<dbReference type="InterPro" id="IPR034904">
    <property type="entry name" value="FSCA_dom_sf"/>
</dbReference>
<dbReference type="InterPro" id="IPR035903">
    <property type="entry name" value="HesB-like_dom_sf"/>
</dbReference>
<dbReference type="InterPro" id="IPR001075">
    <property type="entry name" value="NIF_FeS_clus_asmbl_NifU_C"/>
</dbReference>
<dbReference type="NCBIfam" id="NF008392">
    <property type="entry name" value="PRK11190.1"/>
    <property type="match status" value="1"/>
</dbReference>
<dbReference type="NCBIfam" id="TIGR03341">
    <property type="entry name" value="YhgI_GntY"/>
    <property type="match status" value="1"/>
</dbReference>
<dbReference type="PANTHER" id="PTHR11178:SF51">
    <property type="entry name" value="FE_S BIOGENESIS PROTEIN NFUA"/>
    <property type="match status" value="1"/>
</dbReference>
<dbReference type="PANTHER" id="PTHR11178">
    <property type="entry name" value="IRON-SULFUR CLUSTER SCAFFOLD PROTEIN NFU-RELATED"/>
    <property type="match status" value="1"/>
</dbReference>
<dbReference type="Pfam" id="PF01521">
    <property type="entry name" value="Fe-S_biosyn"/>
    <property type="match status" value="1"/>
</dbReference>
<dbReference type="Pfam" id="PF01106">
    <property type="entry name" value="NifU"/>
    <property type="match status" value="1"/>
</dbReference>
<dbReference type="SUPFAM" id="SSF117916">
    <property type="entry name" value="Fe-S cluster assembly (FSCA) domain-like"/>
    <property type="match status" value="1"/>
</dbReference>
<dbReference type="SUPFAM" id="SSF89360">
    <property type="entry name" value="HesB-like domain"/>
    <property type="match status" value="1"/>
</dbReference>
<organism>
    <name type="scientific">Shewanella putrefaciens (strain CN-32 / ATCC BAA-453)</name>
    <dbReference type="NCBI Taxonomy" id="319224"/>
    <lineage>
        <taxon>Bacteria</taxon>
        <taxon>Pseudomonadati</taxon>
        <taxon>Pseudomonadota</taxon>
        <taxon>Gammaproteobacteria</taxon>
        <taxon>Alteromonadales</taxon>
        <taxon>Shewanellaceae</taxon>
        <taxon>Shewanella</taxon>
    </lineage>
</organism>